<keyword id="KW-1003">Cell membrane</keyword>
<keyword id="KW-0472">Membrane</keyword>
<keyword id="KW-1185">Reference proteome</keyword>
<keyword id="KW-0812">Transmembrane</keyword>
<keyword id="KW-1133">Transmembrane helix</keyword>
<comment type="subcellular location">
    <subcellularLocation>
        <location evidence="1">Cell membrane</location>
        <topology evidence="1">Multi-pass membrane protein</topology>
    </subcellularLocation>
</comment>
<comment type="similarity">
    <text evidence="1">Belongs to the UPF0391 family.</text>
</comment>
<organism>
    <name type="scientific">Citrifermentans bemidjiense (strain ATCC BAA-1014 / DSM 16622 / JCM 12645 / Bem)</name>
    <name type="common">Geobacter bemidjiensis</name>
    <dbReference type="NCBI Taxonomy" id="404380"/>
    <lineage>
        <taxon>Bacteria</taxon>
        <taxon>Pseudomonadati</taxon>
        <taxon>Thermodesulfobacteriota</taxon>
        <taxon>Desulfuromonadia</taxon>
        <taxon>Geobacterales</taxon>
        <taxon>Geobacteraceae</taxon>
        <taxon>Citrifermentans</taxon>
    </lineage>
</organism>
<accession>B5E921</accession>
<reference key="1">
    <citation type="submission" date="2008-07" db="EMBL/GenBank/DDBJ databases">
        <title>Complete sequence of Geobacter bemidjiensis BEM.</title>
        <authorList>
            <consortium name="US DOE Joint Genome Institute"/>
            <person name="Lucas S."/>
            <person name="Copeland A."/>
            <person name="Lapidus A."/>
            <person name="Glavina del Rio T."/>
            <person name="Dalin E."/>
            <person name="Tice H."/>
            <person name="Bruce D."/>
            <person name="Goodwin L."/>
            <person name="Pitluck S."/>
            <person name="Kiss H."/>
            <person name="Brettin T."/>
            <person name="Detter J.C."/>
            <person name="Han C."/>
            <person name="Kuske C.R."/>
            <person name="Schmutz J."/>
            <person name="Larimer F."/>
            <person name="Land M."/>
            <person name="Hauser L."/>
            <person name="Kyrpides N."/>
            <person name="Lykidis A."/>
            <person name="Lovley D."/>
            <person name="Richardson P."/>
        </authorList>
    </citation>
    <scope>NUCLEOTIDE SEQUENCE [LARGE SCALE GENOMIC DNA]</scope>
    <source>
        <strain>ATCC BAA-1014 / DSM 16622 / JCM 12645 / Bem</strain>
    </source>
</reference>
<feature type="chain" id="PRO_1000143714" description="UPF0391 membrane protein Gbem_0127">
    <location>
        <begin position="1"/>
        <end position="58"/>
    </location>
</feature>
<feature type="transmembrane region" description="Helical" evidence="1">
    <location>
        <begin position="4"/>
        <end position="24"/>
    </location>
</feature>
<feature type="transmembrane region" description="Helical" evidence="1">
    <location>
        <begin position="33"/>
        <end position="53"/>
    </location>
</feature>
<protein>
    <recommendedName>
        <fullName evidence="1">UPF0391 membrane protein Gbem_0127</fullName>
    </recommendedName>
</protein>
<name>Y127_CITBB</name>
<gene>
    <name type="ordered locus">Gbem_0127</name>
</gene>
<sequence length="58" mass="6170">MLRWALIFFIIAIIAAVFGFGGIATAAAGIAKILFYLFLVVAVVMLVSALLAGRNITR</sequence>
<dbReference type="EMBL" id="CP001124">
    <property type="protein sequence ID" value="ACH37158.1"/>
    <property type="molecule type" value="Genomic_DNA"/>
</dbReference>
<dbReference type="STRING" id="404380.Gbem_0127"/>
<dbReference type="KEGG" id="gbm:Gbem_0127"/>
<dbReference type="eggNOG" id="COG5487">
    <property type="taxonomic scope" value="Bacteria"/>
</dbReference>
<dbReference type="HOGENOM" id="CLU_187346_1_0_7"/>
<dbReference type="Proteomes" id="UP000008825">
    <property type="component" value="Chromosome"/>
</dbReference>
<dbReference type="GO" id="GO:0005886">
    <property type="term" value="C:plasma membrane"/>
    <property type="evidence" value="ECO:0007669"/>
    <property type="project" value="UniProtKB-SubCell"/>
</dbReference>
<dbReference type="HAMAP" id="MF_01361">
    <property type="entry name" value="UPF0391"/>
    <property type="match status" value="1"/>
</dbReference>
<dbReference type="InterPro" id="IPR009760">
    <property type="entry name" value="DUF1328"/>
</dbReference>
<dbReference type="NCBIfam" id="NF010226">
    <property type="entry name" value="PRK13682.1-1"/>
    <property type="match status" value="1"/>
</dbReference>
<dbReference type="NCBIfam" id="NF010229">
    <property type="entry name" value="PRK13682.1-4"/>
    <property type="match status" value="1"/>
</dbReference>
<dbReference type="Pfam" id="PF07043">
    <property type="entry name" value="DUF1328"/>
    <property type="match status" value="1"/>
</dbReference>
<dbReference type="PIRSF" id="PIRSF036466">
    <property type="entry name" value="UCP036466"/>
    <property type="match status" value="1"/>
</dbReference>
<evidence type="ECO:0000255" key="1">
    <source>
        <dbReference type="HAMAP-Rule" id="MF_01361"/>
    </source>
</evidence>
<proteinExistence type="inferred from homology"/>